<name>DCHS_ACIBT</name>
<reference key="1">
    <citation type="journal article" date="2007" name="Genes Dev.">
        <title>New insights into Acinetobacter baumannii pathogenesis revealed by high-density pyrosequencing and transposon mutagenesis.</title>
        <authorList>
            <person name="Smith M.G."/>
            <person name="Gianoulis T.A."/>
            <person name="Pukatzki S."/>
            <person name="Mekalanos J.J."/>
            <person name="Ornston L.N."/>
            <person name="Gerstein M."/>
            <person name="Snyder M."/>
        </authorList>
    </citation>
    <scope>NUCLEOTIDE SEQUENCE [LARGE SCALE GENOMIC DNA]</scope>
    <source>
        <strain>ATCC 17978 / DSM 105126 / CIP 53.77 / LMG 1025 / NCDC KC755 / 5377</strain>
    </source>
</reference>
<gene>
    <name evidence="1" type="primary">hdc</name>
    <name type="ordered locus">A1S_2379</name>
</gene>
<feature type="chain" id="PRO_1000130347" description="Histidine decarboxylase">
    <location>
        <begin position="1"/>
        <end position="383"/>
    </location>
</feature>
<feature type="binding site" evidence="1">
    <location>
        <position position="120"/>
    </location>
    <ligand>
        <name>substrate</name>
    </ligand>
</feature>
<feature type="modified residue" description="N6-(pyridoxal phosphate)lysine" evidence="1">
    <location>
        <position position="233"/>
    </location>
</feature>
<evidence type="ECO:0000255" key="1">
    <source>
        <dbReference type="HAMAP-Rule" id="MF_00609"/>
    </source>
</evidence>
<sequence length="383" mass="43756">MILSPADQERIETFWNYCLKHQYFNIGYPESADFDYSALFRFFKFSINNCGDWKDYSNYALNSFDFEKDVMAYFAEIFQIPFEESWGYVTNGGTEGNMFGCYLARELFPDSTLYYSKDTHYSVGKIAKLLQMKSCVIESLDNGEIDYDDLIHKIKTNKESHPIIFANIGTTMTGAIDDIEMIQERLAQIGIMRRDYYIHADAALSGMILPFVDHPQAFSFAHGIDSICVSGHKMIGSPIPCGIVVAKRQNVERISVDVDYISTRDQTISGSRNGHTVLLMWAAIRSQTNLQRRHRIQHCLKMAQYAVDRFQAVGIPAWRNPNSITVVFPCPSEHIWKKHYLATSGNMAHLITTAHHRDTRQIDSLIDDVIFDLQGASKRTVGF</sequence>
<dbReference type="EC" id="4.1.1.22" evidence="1"/>
<dbReference type="EMBL" id="CP000521">
    <property type="protein sequence ID" value="ABO12798.2"/>
    <property type="molecule type" value="Genomic_DNA"/>
</dbReference>
<dbReference type="SMR" id="A3M7A4"/>
<dbReference type="DNASU" id="4918294"/>
<dbReference type="KEGG" id="acb:A1S_2379"/>
<dbReference type="HOGENOM" id="CLU_028929_0_2_6"/>
<dbReference type="PHI-base" id="PHI:11830"/>
<dbReference type="PHI-base" id="PHI:123416"/>
<dbReference type="GO" id="GO:0004398">
    <property type="term" value="F:histidine decarboxylase activity"/>
    <property type="evidence" value="ECO:0007669"/>
    <property type="project" value="UniProtKB-UniRule"/>
</dbReference>
<dbReference type="GO" id="GO:0030170">
    <property type="term" value="F:pyridoxal phosphate binding"/>
    <property type="evidence" value="ECO:0007669"/>
    <property type="project" value="InterPro"/>
</dbReference>
<dbReference type="GO" id="GO:0019752">
    <property type="term" value="P:carboxylic acid metabolic process"/>
    <property type="evidence" value="ECO:0007669"/>
    <property type="project" value="InterPro"/>
</dbReference>
<dbReference type="Gene3D" id="3.40.640.10">
    <property type="entry name" value="Type I PLP-dependent aspartate aminotransferase-like (Major domain)"/>
    <property type="match status" value="1"/>
</dbReference>
<dbReference type="HAMAP" id="MF_00609">
    <property type="entry name" value="Pyridoxal_decarbox"/>
    <property type="match status" value="1"/>
</dbReference>
<dbReference type="InterPro" id="IPR051151">
    <property type="entry name" value="Group_II_Decarboxylase"/>
</dbReference>
<dbReference type="InterPro" id="IPR023523">
    <property type="entry name" value="Hist_deCOase_bac"/>
</dbReference>
<dbReference type="InterPro" id="IPR002129">
    <property type="entry name" value="PyrdxlP-dep_de-COase"/>
</dbReference>
<dbReference type="InterPro" id="IPR015424">
    <property type="entry name" value="PyrdxlP-dep_Trfase"/>
</dbReference>
<dbReference type="InterPro" id="IPR015421">
    <property type="entry name" value="PyrdxlP-dep_Trfase_major"/>
</dbReference>
<dbReference type="InterPro" id="IPR021115">
    <property type="entry name" value="Pyridoxal-P_BS"/>
</dbReference>
<dbReference type="NCBIfam" id="NF002748">
    <property type="entry name" value="PRK02769.1"/>
    <property type="match status" value="1"/>
</dbReference>
<dbReference type="PANTHER" id="PTHR46101">
    <property type="match status" value="1"/>
</dbReference>
<dbReference type="PANTHER" id="PTHR46101:SF2">
    <property type="entry name" value="SERINE DECARBOXYLASE"/>
    <property type="match status" value="1"/>
</dbReference>
<dbReference type="Pfam" id="PF00282">
    <property type="entry name" value="Pyridoxal_deC"/>
    <property type="match status" value="1"/>
</dbReference>
<dbReference type="SUPFAM" id="SSF53383">
    <property type="entry name" value="PLP-dependent transferases"/>
    <property type="match status" value="1"/>
</dbReference>
<dbReference type="PROSITE" id="PS00392">
    <property type="entry name" value="DDC_GAD_HDC_YDC"/>
    <property type="match status" value="1"/>
</dbReference>
<accession>A3M7A4</accession>
<organism>
    <name type="scientific">Acinetobacter baumannii (strain ATCC 17978 / DSM 105126 / CIP 53.77 / LMG 1025 / NCDC KC755 / 5377)</name>
    <dbReference type="NCBI Taxonomy" id="400667"/>
    <lineage>
        <taxon>Bacteria</taxon>
        <taxon>Pseudomonadati</taxon>
        <taxon>Pseudomonadota</taxon>
        <taxon>Gammaproteobacteria</taxon>
        <taxon>Moraxellales</taxon>
        <taxon>Moraxellaceae</taxon>
        <taxon>Acinetobacter</taxon>
        <taxon>Acinetobacter calcoaceticus/baumannii complex</taxon>
    </lineage>
</organism>
<proteinExistence type="inferred from homology"/>
<keyword id="KW-0210">Decarboxylase</keyword>
<keyword id="KW-0456">Lyase</keyword>
<keyword id="KW-0663">Pyridoxal phosphate</keyword>
<protein>
    <recommendedName>
        <fullName evidence="1">Histidine decarboxylase</fullName>
        <shortName evidence="1">HDC</shortName>
        <ecNumber evidence="1">4.1.1.22</ecNumber>
    </recommendedName>
</protein>
<comment type="catalytic activity">
    <reaction evidence="1">
        <text>L-histidine + H(+) = histamine + CO2</text>
        <dbReference type="Rhea" id="RHEA:20840"/>
        <dbReference type="ChEBI" id="CHEBI:15378"/>
        <dbReference type="ChEBI" id="CHEBI:16526"/>
        <dbReference type="ChEBI" id="CHEBI:57595"/>
        <dbReference type="ChEBI" id="CHEBI:58432"/>
        <dbReference type="EC" id="4.1.1.22"/>
    </reaction>
</comment>
<comment type="cofactor">
    <cofactor evidence="1">
        <name>pyridoxal 5'-phosphate</name>
        <dbReference type="ChEBI" id="CHEBI:597326"/>
    </cofactor>
</comment>
<comment type="subunit">
    <text evidence="1">Homotetramer.</text>
</comment>
<comment type="similarity">
    <text evidence="1">Belongs to the group II decarboxylase family.</text>
</comment>